<organism>
    <name type="scientific">Synechococcus sp. (strain CC9902)</name>
    <dbReference type="NCBI Taxonomy" id="316279"/>
    <lineage>
        <taxon>Bacteria</taxon>
        <taxon>Bacillati</taxon>
        <taxon>Cyanobacteriota</taxon>
        <taxon>Cyanophyceae</taxon>
        <taxon>Synechococcales</taxon>
        <taxon>Synechococcaceae</taxon>
        <taxon>Synechococcus</taxon>
    </lineage>
</organism>
<sequence>MPTIQQLIRTERSRLKVKTKSPALKSCPERRGVCTRVYTSTPKKPNSALRKVARVRLTSGFEVTAYIGGIGHNLQEHSVVLIRGGRVKDLPGVRYHIIRGTLDTSGVKDRRQSRSKYGAKAPKE</sequence>
<feature type="chain" id="PRO_0000238147" description="Small ribosomal subunit protein uS12">
    <location>
        <begin position="1"/>
        <end position="124"/>
    </location>
</feature>
<feature type="region of interest" description="Disordered" evidence="3">
    <location>
        <begin position="101"/>
        <end position="124"/>
    </location>
</feature>
<feature type="modified residue" description="3-methylthioaspartic acid" evidence="1">
    <location>
        <position position="89"/>
    </location>
</feature>
<reference key="1">
    <citation type="submission" date="2005-08" db="EMBL/GenBank/DDBJ databases">
        <title>Complete sequence of Synechococcus sp. CC9902.</title>
        <authorList>
            <person name="Copeland A."/>
            <person name="Lucas S."/>
            <person name="Lapidus A."/>
            <person name="Barry K."/>
            <person name="Detter J.C."/>
            <person name="Glavina T."/>
            <person name="Hammon N."/>
            <person name="Israni S."/>
            <person name="Pitluck S."/>
            <person name="Martinez M."/>
            <person name="Schmutz J."/>
            <person name="Larimer F."/>
            <person name="Land M."/>
            <person name="Kyrpides N."/>
            <person name="Ivanova N."/>
            <person name="Richardson P."/>
        </authorList>
    </citation>
    <scope>NUCLEOTIDE SEQUENCE [LARGE SCALE GENOMIC DNA]</scope>
    <source>
        <strain>CC9902</strain>
    </source>
</reference>
<protein>
    <recommendedName>
        <fullName evidence="2">Small ribosomal subunit protein uS12</fullName>
    </recommendedName>
    <alternativeName>
        <fullName evidence="4">30S ribosomal protein S12</fullName>
    </alternativeName>
</protein>
<name>RS12_SYNS9</name>
<keyword id="KW-0488">Methylation</keyword>
<keyword id="KW-1185">Reference proteome</keyword>
<keyword id="KW-0687">Ribonucleoprotein</keyword>
<keyword id="KW-0689">Ribosomal protein</keyword>
<keyword id="KW-0694">RNA-binding</keyword>
<keyword id="KW-0699">rRNA-binding</keyword>
<keyword id="KW-0820">tRNA-binding</keyword>
<comment type="function">
    <text evidence="2">With S4 and S5 plays an important role in translational accuracy.</text>
</comment>
<comment type="function">
    <text evidence="2">Interacts with and stabilizes bases of the 16S rRNA that are involved in tRNA selection in the A site and with the mRNA backbone. Located at the interface of the 30S and 50S subunits, it traverses the body of the 30S subunit contacting proteins on the other side and probably holding the rRNA structure together. The combined cluster of proteins S8, S12 and S17 appears to hold together the shoulder and platform of the 30S subunit.</text>
</comment>
<comment type="subunit">
    <text evidence="2">Part of the 30S ribosomal subunit. Contacts proteins S8 and S17. May interact with IF1 in the 30S initiation complex.</text>
</comment>
<comment type="similarity">
    <text evidence="2">Belongs to the universal ribosomal protein uS12 family.</text>
</comment>
<dbReference type="EMBL" id="CP000097">
    <property type="protein sequence ID" value="ABB26977.1"/>
    <property type="molecule type" value="Genomic_DNA"/>
</dbReference>
<dbReference type="RefSeq" id="WP_011360768.1">
    <property type="nucleotide sequence ID" value="NC_007513.1"/>
</dbReference>
<dbReference type="SMR" id="Q3AW56"/>
<dbReference type="STRING" id="316279.Syncc9902_2019"/>
<dbReference type="KEGG" id="sye:Syncc9902_2019"/>
<dbReference type="eggNOG" id="COG0048">
    <property type="taxonomic scope" value="Bacteria"/>
</dbReference>
<dbReference type="HOGENOM" id="CLU_104295_1_2_3"/>
<dbReference type="OrthoDB" id="9802366at2"/>
<dbReference type="Proteomes" id="UP000002712">
    <property type="component" value="Chromosome"/>
</dbReference>
<dbReference type="GO" id="GO:0015935">
    <property type="term" value="C:small ribosomal subunit"/>
    <property type="evidence" value="ECO:0007669"/>
    <property type="project" value="InterPro"/>
</dbReference>
<dbReference type="GO" id="GO:0019843">
    <property type="term" value="F:rRNA binding"/>
    <property type="evidence" value="ECO:0007669"/>
    <property type="project" value="UniProtKB-UniRule"/>
</dbReference>
<dbReference type="GO" id="GO:0003735">
    <property type="term" value="F:structural constituent of ribosome"/>
    <property type="evidence" value="ECO:0007669"/>
    <property type="project" value="InterPro"/>
</dbReference>
<dbReference type="GO" id="GO:0000049">
    <property type="term" value="F:tRNA binding"/>
    <property type="evidence" value="ECO:0007669"/>
    <property type="project" value="UniProtKB-UniRule"/>
</dbReference>
<dbReference type="GO" id="GO:0006412">
    <property type="term" value="P:translation"/>
    <property type="evidence" value="ECO:0007669"/>
    <property type="project" value="UniProtKB-UniRule"/>
</dbReference>
<dbReference type="CDD" id="cd03368">
    <property type="entry name" value="Ribosomal_S12"/>
    <property type="match status" value="1"/>
</dbReference>
<dbReference type="FunFam" id="2.40.50.140:FF:000001">
    <property type="entry name" value="30S ribosomal protein S12"/>
    <property type="match status" value="1"/>
</dbReference>
<dbReference type="Gene3D" id="2.40.50.140">
    <property type="entry name" value="Nucleic acid-binding proteins"/>
    <property type="match status" value="1"/>
</dbReference>
<dbReference type="HAMAP" id="MF_00403_B">
    <property type="entry name" value="Ribosomal_uS12_B"/>
    <property type="match status" value="1"/>
</dbReference>
<dbReference type="InterPro" id="IPR012340">
    <property type="entry name" value="NA-bd_OB-fold"/>
</dbReference>
<dbReference type="InterPro" id="IPR006032">
    <property type="entry name" value="Ribosomal_uS12"/>
</dbReference>
<dbReference type="InterPro" id="IPR005679">
    <property type="entry name" value="Ribosomal_uS12_bac"/>
</dbReference>
<dbReference type="NCBIfam" id="TIGR00981">
    <property type="entry name" value="rpsL_bact"/>
    <property type="match status" value="1"/>
</dbReference>
<dbReference type="PANTHER" id="PTHR11652">
    <property type="entry name" value="30S RIBOSOMAL PROTEIN S12 FAMILY MEMBER"/>
    <property type="match status" value="1"/>
</dbReference>
<dbReference type="Pfam" id="PF00164">
    <property type="entry name" value="Ribosom_S12_S23"/>
    <property type="match status" value="1"/>
</dbReference>
<dbReference type="PIRSF" id="PIRSF002133">
    <property type="entry name" value="Ribosomal_S12/S23"/>
    <property type="match status" value="1"/>
</dbReference>
<dbReference type="PRINTS" id="PR01034">
    <property type="entry name" value="RIBOSOMALS12"/>
</dbReference>
<dbReference type="SUPFAM" id="SSF50249">
    <property type="entry name" value="Nucleic acid-binding proteins"/>
    <property type="match status" value="1"/>
</dbReference>
<dbReference type="PROSITE" id="PS00055">
    <property type="entry name" value="RIBOSOMAL_S12"/>
    <property type="match status" value="1"/>
</dbReference>
<gene>
    <name evidence="2" type="primary">rpsL</name>
    <name evidence="2" type="synonym">rps12</name>
    <name type="ordered locus">Syncc9902_2019</name>
</gene>
<evidence type="ECO:0000250" key="1"/>
<evidence type="ECO:0000255" key="2">
    <source>
        <dbReference type="HAMAP-Rule" id="MF_00403"/>
    </source>
</evidence>
<evidence type="ECO:0000256" key="3">
    <source>
        <dbReference type="SAM" id="MobiDB-lite"/>
    </source>
</evidence>
<evidence type="ECO:0000305" key="4"/>
<proteinExistence type="inferred from homology"/>
<accession>Q3AW56</accession>